<keyword id="KW-0167">Capsid protein</keyword>
<keyword id="KW-1176">Cytoplasmic inwards viral transport</keyword>
<keyword id="KW-1015">Disulfide bond</keyword>
<keyword id="KW-0238">DNA-binding</keyword>
<keyword id="KW-1039">Host endosome</keyword>
<keyword id="KW-1040">Host Golgi apparatus</keyword>
<keyword id="KW-1048">Host nucleus</keyword>
<keyword id="KW-0945">Host-virus interaction</keyword>
<keyword id="KW-0426">Late protein</keyword>
<keyword id="KW-1177">Microtubular inwards viral transport</keyword>
<keyword id="KW-0597">Phosphoprotein</keyword>
<keyword id="KW-1163">Viral penetration into host nucleus</keyword>
<keyword id="KW-0946">Virion</keyword>
<keyword id="KW-1160">Virus entry into host cell</keyword>
<gene>
    <name evidence="1" type="primary">L2</name>
</gene>
<accession>Q80960</accession>
<dbReference type="EMBL" id="U31794">
    <property type="protein sequence ID" value="AAA79504.1"/>
    <property type="molecule type" value="Genomic_DNA"/>
</dbReference>
<dbReference type="Proteomes" id="UP000007673">
    <property type="component" value="Genome"/>
</dbReference>
<dbReference type="GO" id="GO:0043657">
    <property type="term" value="C:host cell"/>
    <property type="evidence" value="ECO:0007669"/>
    <property type="project" value="GOC"/>
</dbReference>
<dbReference type="GO" id="GO:0044174">
    <property type="term" value="C:host cell endosome"/>
    <property type="evidence" value="ECO:0007669"/>
    <property type="project" value="UniProtKB-KW"/>
</dbReference>
<dbReference type="GO" id="GO:0044177">
    <property type="term" value="C:host cell Golgi apparatus"/>
    <property type="evidence" value="ECO:0007669"/>
    <property type="project" value="UniProtKB-SubCell"/>
</dbReference>
<dbReference type="GO" id="GO:0042025">
    <property type="term" value="C:host cell nucleus"/>
    <property type="evidence" value="ECO:0007669"/>
    <property type="project" value="UniProtKB-SubCell"/>
</dbReference>
<dbReference type="GO" id="GO:0019028">
    <property type="term" value="C:viral capsid"/>
    <property type="evidence" value="ECO:0007669"/>
    <property type="project" value="UniProtKB-UniRule"/>
</dbReference>
<dbReference type="GO" id="GO:0003677">
    <property type="term" value="F:DNA binding"/>
    <property type="evidence" value="ECO:0007669"/>
    <property type="project" value="UniProtKB-UniRule"/>
</dbReference>
<dbReference type="GO" id="GO:0005198">
    <property type="term" value="F:structural molecule activity"/>
    <property type="evidence" value="ECO:0007669"/>
    <property type="project" value="UniProtKB-UniRule"/>
</dbReference>
<dbReference type="GO" id="GO:0075521">
    <property type="term" value="P:microtubule-dependent intracellular transport of viral material towards nucleus"/>
    <property type="evidence" value="ECO:0007669"/>
    <property type="project" value="UniProtKB-UniRule"/>
</dbReference>
<dbReference type="GO" id="GO:0046718">
    <property type="term" value="P:symbiont entry into host cell"/>
    <property type="evidence" value="ECO:0007669"/>
    <property type="project" value="UniProtKB-KW"/>
</dbReference>
<dbReference type="GO" id="GO:0075732">
    <property type="term" value="P:viral penetration into host nucleus"/>
    <property type="evidence" value="ECO:0007669"/>
    <property type="project" value="UniProtKB-KW"/>
</dbReference>
<dbReference type="HAMAP" id="MF_04003">
    <property type="entry name" value="PPV_L2"/>
    <property type="match status" value="1"/>
</dbReference>
<dbReference type="InterPro" id="IPR000784">
    <property type="entry name" value="Late_L2"/>
</dbReference>
<dbReference type="Pfam" id="PF00513">
    <property type="entry name" value="Late_protein_L2"/>
    <property type="match status" value="1"/>
</dbReference>
<reference key="1">
    <citation type="submission" date="1995-10" db="EMBL/GenBank/DDBJ databases">
        <authorList>
            <person name="Delius H."/>
        </authorList>
    </citation>
    <scope>NUCLEOTIDE SEQUENCE [GENOMIC DNA]</scope>
</reference>
<protein>
    <recommendedName>
        <fullName evidence="1">Minor capsid protein L2</fullName>
    </recommendedName>
</protein>
<comment type="function">
    <text evidence="1">Minor protein of the capsid that localizes along the inner surface of the virion, within the central cavities beneath the L1 pentamers. Plays a role in capsid stabilization through interaction with the major capsid protein L1. Once the virion enters the host cell, L2 escorts the genomic DNA into the nucleus by promoting escape from the endosomal compartments and traffic through the host Golgi network. Mechanistically, the C-terminus of L2 possesses a cell-penetrating peptide that protudes from the host endosome, interacts with host cytoplasmic retromer cargo and thereby mediates the capsid delivery to the host trans-Golgi network. Plays a role through its interaction with host dynein in the intracellular microtubule-dependent transport of viral capsid toward the nucleus. Mediates the viral genome import into the nucleus through binding to host importins. Once within the nucleus, L2 localizes viral genomes to host PML bodies in order to activate early gene expression for establishment of infection. Later on, promotes late gene expression by interacting with the viral E2 protein and by inhibiting its transcriptional activation functions. During virion assembly, encapsidates the genome by direct interaction with the viral DNA.</text>
</comment>
<comment type="subunit">
    <text evidence="1">Interacts with major capsid protein L1. Interacts with E2; this interaction inhibits E2 transcriptional activity but not the DNA replication function E2. Interacts with host GADD45GIP1. Interacts with host HSPA8; this interaction is required for L2 nuclear translocation. Interacts with host importins KPNB2 and KPNB3. Forms a complex with importin alpha2-beta1 heterodimers via interaction with the importin alpha2 adapter. Interacts with host DYNLT1; this interaction is essential for virus intracellular transport during entry. Interacts (via C-terminus) with host retromer subunits VPS35 and VPS29.</text>
</comment>
<comment type="subcellular location">
    <subcellularLocation>
        <location evidence="1">Virion</location>
    </subcellularLocation>
    <subcellularLocation>
        <location evidence="1">Host nucleus</location>
    </subcellularLocation>
    <subcellularLocation>
        <location evidence="1">Host early endosome</location>
    </subcellularLocation>
    <subcellularLocation>
        <location evidence="1">Host Golgi apparatus</location>
    </subcellularLocation>
</comment>
<comment type="PTM">
    <text evidence="1">Highly phosphorylated.</text>
</comment>
<comment type="similarity">
    <text evidence="1">Belongs to the papillomaviridae L2 protein family.</text>
</comment>
<name>VL2_HPV66</name>
<organism>
    <name type="scientific">Human papillomavirus 66</name>
    <dbReference type="NCBI Taxonomy" id="37119"/>
    <lineage>
        <taxon>Viruses</taxon>
        <taxon>Monodnaviria</taxon>
        <taxon>Shotokuvirae</taxon>
        <taxon>Cossaviricota</taxon>
        <taxon>Papovaviricetes</taxon>
        <taxon>Zurhausenvirales</taxon>
        <taxon>Papillomaviridae</taxon>
        <taxon>Firstpapillomavirinae</taxon>
        <taxon>Alphapapillomavirus</taxon>
        <taxon>Alphapapillomavirus 6</taxon>
    </lineage>
</organism>
<sequence length="464" mass="49988">MVAHRATRRKRASATQLYKTCKLSGTCPEDVINKVEQKTWADRILQWGSLFTYFGGLGIGTGSGSGGRAGYVPLGSRPSTIVDVTPARPPIVVESVGPTDPSIVTLVEESSVINSGAGVPNFTGSGGFEVTSSSTTTPAVLDITPTSSTVHVSSTTITNPLYIDPPVIEAPQTGEVSGNILISTPTSGIHSYEEIPMQTFAIHGTGNEPISSTPIPGFRRLAAPRLYSRAFQQVRVTDPAFLDNPTTLISADNPVFEGADTTLTFSPSGVAPDPDFMDIVALHRPAFTTRRTGVRFSRLGKKATMQTRRGTQIGARVHYYYDISPIAQADEIEMQPLLSTDNSFDGLYDIYANIDDEAPISFRQSGATPSAQLPIKPSTLSFASNTANVTAPLGNVWETPFYSGPDIVLPTGPSTWPFVPQSPSDVTHDVYIQGATFALWPVYFFKRRRRKRIPYFFADGDVAA</sequence>
<organismHost>
    <name type="scientific">Homo sapiens</name>
    <name type="common">Human</name>
    <dbReference type="NCBI Taxonomy" id="9606"/>
</organismHost>
<evidence type="ECO:0000255" key="1">
    <source>
        <dbReference type="HAMAP-Rule" id="MF_04003"/>
    </source>
</evidence>
<feature type="chain" id="PRO_0000133630" description="Minor capsid protein L2">
    <location>
        <begin position="1"/>
        <end position="464"/>
    </location>
</feature>
<feature type="short sequence motif" description="Nuclear localization signal" evidence="1">
    <location>
        <begin position="1"/>
        <end position="12"/>
    </location>
</feature>
<feature type="short sequence motif" description="Nuclear localization signal" evidence="1">
    <location>
        <begin position="445"/>
        <end position="453"/>
    </location>
</feature>
<feature type="disulfide bond" evidence="1">
    <location>
        <begin position="21"/>
        <end position="27"/>
    </location>
</feature>
<proteinExistence type="inferred from homology"/>